<evidence type="ECO:0000250" key="1">
    <source>
        <dbReference type="UniProtKB" id="Q00802"/>
    </source>
</evidence>
<evidence type="ECO:0000255" key="2"/>
<evidence type="ECO:0000303" key="3">
    <source>
    </source>
</evidence>
<evidence type="ECO:0000305" key="4"/>
<protein>
    <recommendedName>
        <fullName evidence="3">Low molecular mass lipoprotein PBMHPC-23</fullName>
    </recommendedName>
</protein>
<name>LPP23_BOMMO</name>
<comment type="subcellular location">
    <subcellularLocation>
        <location evidence="1">Secreted</location>
    </subcellularLocation>
</comment>
<comment type="miscellaneous">
    <text evidence="4">This lipoprotein belongs to the group of structurally related '30 kDa proteins' that comprise major protein components of the fifth (and last) instar larvae and of pupae.</text>
</comment>
<comment type="similarity">
    <text evidence="4">Belongs to the 30 kDa lipoprotein family.</text>
</comment>
<feature type="signal peptide" evidence="2">
    <location>
        <begin position="1"/>
        <end position="23"/>
    </location>
</feature>
<feature type="chain" id="PRO_0000021604" description="Low molecular mass lipoprotein PBMHPC-23">
    <location>
        <begin position="24"/>
        <end position="264"/>
    </location>
</feature>
<sequence length="264" mass="30343">MKFLVVFAVVRACVTPACAEMSAVSMSSSNKELEEKLYNSILTGDYDSAVRQSLEYESQGKGSIIQNVVNNLIIDKRRNTMEYCYKLWVGNGQEIVRKYFPLNFRLIMAGNYVKIIYRNYNLALKLGSTTNPSNERIAYGDGVDKHTELVSWKFITLWENNRVYFKIHNTKYNQYLKMSTTTCNCNSRDRVVYGGNSADSTREQWFFQPAKYENDVLFFIYNRQFNDALELGTIVNASGDRKAVGHDGEVAGLPDIYSWFITPF</sequence>
<proteinExistence type="evidence at transcript level"/>
<organism>
    <name type="scientific">Bombyx mori</name>
    <name type="common">Silk moth</name>
    <dbReference type="NCBI Taxonomy" id="7091"/>
    <lineage>
        <taxon>Eukaryota</taxon>
        <taxon>Metazoa</taxon>
        <taxon>Ecdysozoa</taxon>
        <taxon>Arthropoda</taxon>
        <taxon>Hexapoda</taxon>
        <taxon>Insecta</taxon>
        <taxon>Pterygota</taxon>
        <taxon>Neoptera</taxon>
        <taxon>Endopterygota</taxon>
        <taxon>Lepidoptera</taxon>
        <taxon>Glossata</taxon>
        <taxon>Ditrysia</taxon>
        <taxon>Bombycoidea</taxon>
        <taxon>Bombycidae</taxon>
        <taxon>Bombycinae</taxon>
        <taxon>Bombyx</taxon>
    </lineage>
</organism>
<dbReference type="EMBL" id="X07556">
    <property type="protein sequence ID" value="CAA30437.1"/>
    <property type="molecule type" value="mRNA"/>
</dbReference>
<dbReference type="PIR" id="S01048">
    <property type="entry name" value="S01048"/>
</dbReference>
<dbReference type="SMR" id="P09338"/>
<dbReference type="InParanoid" id="P09338"/>
<dbReference type="Proteomes" id="UP000005204">
    <property type="component" value="Unassembled WGS sequence"/>
</dbReference>
<dbReference type="GO" id="GO:0005576">
    <property type="term" value="C:extracellular region"/>
    <property type="evidence" value="ECO:0007669"/>
    <property type="project" value="UniProtKB-SubCell"/>
</dbReference>
<dbReference type="Gene3D" id="2.80.10.50">
    <property type="match status" value="1"/>
</dbReference>
<dbReference type="Gene3D" id="1.10.10.2400">
    <property type="entry name" value="Lepidopteran low molecular weight (30 kD) lipoprotein, N-terminal domain"/>
    <property type="match status" value="1"/>
</dbReference>
<dbReference type="InterPro" id="IPR004943">
    <property type="entry name" value="Lipoprotein_11"/>
</dbReference>
<dbReference type="InterPro" id="IPR042046">
    <property type="entry name" value="Lipoprotein_11_N"/>
</dbReference>
<dbReference type="Pfam" id="PF03260">
    <property type="entry name" value="Lipoprotein_11"/>
    <property type="match status" value="1"/>
</dbReference>
<keyword id="KW-0449">Lipoprotein</keyword>
<keyword id="KW-1185">Reference proteome</keyword>
<keyword id="KW-0964">Secreted</keyword>
<keyword id="KW-0732">Signal</keyword>
<accession>P09338</accession>
<reference key="1">
    <citation type="journal article" date="1988" name="Biochim. Biophys. Acta">
        <title>Structures and expression of mRNAs coding for major plasma proteins of Bombyx mori.</title>
        <authorList>
            <person name="Sakai N."/>
            <person name="Mori S."/>
            <person name="Izumi S."/>
            <person name="Haino-Fukushima K."/>
            <person name="Ogura T."/>
            <person name="Maekawa H."/>
            <person name="Tomino S."/>
        </authorList>
    </citation>
    <scope>NUCLEOTIDE SEQUENCE [MRNA]</scope>
    <source>
        <strain>Tokai X Asahi</strain>
        <tissue>Fat body</tissue>
    </source>
</reference>